<dbReference type="EC" id="1.18.1.2" evidence="1"/>
<dbReference type="EMBL" id="CP000410">
    <property type="protein sequence ID" value="ABJ54627.1"/>
    <property type="molecule type" value="Genomic_DNA"/>
</dbReference>
<dbReference type="RefSeq" id="WP_000080996.1">
    <property type="nucleotide sequence ID" value="NZ_JAMLJR010000008.1"/>
</dbReference>
<dbReference type="SMR" id="Q04JI5"/>
<dbReference type="PaxDb" id="373153-SPD_1393"/>
<dbReference type="KEGG" id="spd:SPD_1393"/>
<dbReference type="eggNOG" id="COG0492">
    <property type="taxonomic scope" value="Bacteria"/>
</dbReference>
<dbReference type="HOGENOM" id="CLU_031864_5_5_9"/>
<dbReference type="BioCyc" id="SPNE373153:G1G6V-1499-MONOMER"/>
<dbReference type="Proteomes" id="UP000001452">
    <property type="component" value="Chromosome"/>
</dbReference>
<dbReference type="GO" id="GO:0004324">
    <property type="term" value="F:ferredoxin-NADP+ reductase activity"/>
    <property type="evidence" value="ECO:0007669"/>
    <property type="project" value="UniProtKB-UniRule"/>
</dbReference>
<dbReference type="GO" id="GO:0050660">
    <property type="term" value="F:flavin adenine dinucleotide binding"/>
    <property type="evidence" value="ECO:0007669"/>
    <property type="project" value="UniProtKB-UniRule"/>
</dbReference>
<dbReference type="GO" id="GO:0050661">
    <property type="term" value="F:NADP binding"/>
    <property type="evidence" value="ECO:0007669"/>
    <property type="project" value="UniProtKB-UniRule"/>
</dbReference>
<dbReference type="Gene3D" id="3.50.50.60">
    <property type="entry name" value="FAD/NAD(P)-binding domain"/>
    <property type="match status" value="2"/>
</dbReference>
<dbReference type="HAMAP" id="MF_01685">
    <property type="entry name" value="FENR2"/>
    <property type="match status" value="1"/>
</dbReference>
<dbReference type="InterPro" id="IPR036188">
    <property type="entry name" value="FAD/NAD-bd_sf"/>
</dbReference>
<dbReference type="InterPro" id="IPR023753">
    <property type="entry name" value="FAD/NAD-binding_dom"/>
</dbReference>
<dbReference type="InterPro" id="IPR022890">
    <property type="entry name" value="Fd--NADP_Rdtase_type_2"/>
</dbReference>
<dbReference type="InterPro" id="IPR050097">
    <property type="entry name" value="Ferredoxin-NADP_redctase_2"/>
</dbReference>
<dbReference type="PANTHER" id="PTHR48105">
    <property type="entry name" value="THIOREDOXIN REDUCTASE 1-RELATED-RELATED"/>
    <property type="match status" value="1"/>
</dbReference>
<dbReference type="Pfam" id="PF07992">
    <property type="entry name" value="Pyr_redox_2"/>
    <property type="match status" value="1"/>
</dbReference>
<dbReference type="PRINTS" id="PR00368">
    <property type="entry name" value="FADPNR"/>
</dbReference>
<dbReference type="PRINTS" id="PR00469">
    <property type="entry name" value="PNDRDTASEII"/>
</dbReference>
<dbReference type="SUPFAM" id="SSF51905">
    <property type="entry name" value="FAD/NAD(P)-binding domain"/>
    <property type="match status" value="1"/>
</dbReference>
<comment type="catalytic activity">
    <reaction evidence="1">
        <text>2 reduced [2Fe-2S]-[ferredoxin] + NADP(+) + H(+) = 2 oxidized [2Fe-2S]-[ferredoxin] + NADPH</text>
        <dbReference type="Rhea" id="RHEA:20125"/>
        <dbReference type="Rhea" id="RHEA-COMP:10000"/>
        <dbReference type="Rhea" id="RHEA-COMP:10001"/>
        <dbReference type="ChEBI" id="CHEBI:15378"/>
        <dbReference type="ChEBI" id="CHEBI:33737"/>
        <dbReference type="ChEBI" id="CHEBI:33738"/>
        <dbReference type="ChEBI" id="CHEBI:57783"/>
        <dbReference type="ChEBI" id="CHEBI:58349"/>
        <dbReference type="EC" id="1.18.1.2"/>
    </reaction>
</comment>
<comment type="cofactor">
    <cofactor evidence="1">
        <name>FAD</name>
        <dbReference type="ChEBI" id="CHEBI:57692"/>
    </cofactor>
    <text evidence="1">Binds 1 FAD per subunit.</text>
</comment>
<comment type="subunit">
    <text evidence="1">Homodimer.</text>
</comment>
<comment type="similarity">
    <text evidence="1">Belongs to the ferredoxin--NADP reductase type 2 family.</text>
</comment>
<name>FENR_STRP2</name>
<proteinExistence type="inferred from homology"/>
<evidence type="ECO:0000255" key="1">
    <source>
        <dbReference type="HAMAP-Rule" id="MF_01685"/>
    </source>
</evidence>
<keyword id="KW-0274">FAD</keyword>
<keyword id="KW-0285">Flavoprotein</keyword>
<keyword id="KW-0521">NADP</keyword>
<keyword id="KW-0560">Oxidoreductase</keyword>
<keyword id="KW-1185">Reference proteome</keyword>
<accession>Q04JI5</accession>
<organism>
    <name type="scientific">Streptococcus pneumoniae serotype 2 (strain D39 / NCTC 7466)</name>
    <dbReference type="NCBI Taxonomy" id="373153"/>
    <lineage>
        <taxon>Bacteria</taxon>
        <taxon>Bacillati</taxon>
        <taxon>Bacillota</taxon>
        <taxon>Bacilli</taxon>
        <taxon>Lactobacillales</taxon>
        <taxon>Streptococcaceae</taxon>
        <taxon>Streptococcus</taxon>
    </lineage>
</organism>
<feature type="chain" id="PRO_0000364961" description="Ferredoxin--NADP reductase">
    <location>
        <begin position="1"/>
        <end position="322"/>
    </location>
</feature>
<feature type="binding site" evidence="1">
    <location>
        <position position="34"/>
    </location>
    <ligand>
        <name>FAD</name>
        <dbReference type="ChEBI" id="CHEBI:57692"/>
    </ligand>
</feature>
<feature type="binding site" evidence="1">
    <location>
        <position position="42"/>
    </location>
    <ligand>
        <name>FAD</name>
        <dbReference type="ChEBI" id="CHEBI:57692"/>
    </ligand>
</feature>
<feature type="binding site" evidence="1">
    <location>
        <position position="47"/>
    </location>
    <ligand>
        <name>FAD</name>
        <dbReference type="ChEBI" id="CHEBI:57692"/>
    </ligand>
</feature>
<feature type="binding site" evidence="1">
    <location>
        <position position="87"/>
    </location>
    <ligand>
        <name>FAD</name>
        <dbReference type="ChEBI" id="CHEBI:57692"/>
    </ligand>
</feature>
<feature type="binding site" evidence="1">
    <location>
        <position position="120"/>
    </location>
    <ligand>
        <name>FAD</name>
        <dbReference type="ChEBI" id="CHEBI:57692"/>
    </ligand>
</feature>
<feature type="binding site" evidence="1">
    <location>
        <position position="279"/>
    </location>
    <ligand>
        <name>FAD</name>
        <dbReference type="ChEBI" id="CHEBI:57692"/>
    </ligand>
</feature>
<feature type="binding site" evidence="1">
    <location>
        <position position="320"/>
    </location>
    <ligand>
        <name>FAD</name>
        <dbReference type="ChEBI" id="CHEBI:57692"/>
    </ligand>
</feature>
<gene>
    <name type="ordered locus">SPD_1393</name>
</gene>
<protein>
    <recommendedName>
        <fullName evidence="1">Ferredoxin--NADP reductase</fullName>
        <shortName evidence="1">FNR</shortName>
        <shortName evidence="1">Fd-NADP(+) reductase</shortName>
        <ecNumber evidence="1">1.18.1.2</ecNumber>
    </recommendedName>
</protein>
<reference key="1">
    <citation type="journal article" date="2007" name="J. Bacteriol.">
        <title>Genome sequence of Avery's virulent serotype 2 strain D39 of Streptococcus pneumoniae and comparison with that of unencapsulated laboratory strain R6.</title>
        <authorList>
            <person name="Lanie J.A."/>
            <person name="Ng W.-L."/>
            <person name="Kazmierczak K.M."/>
            <person name="Andrzejewski T.M."/>
            <person name="Davidsen T.M."/>
            <person name="Wayne K.J."/>
            <person name="Tettelin H."/>
            <person name="Glass J.I."/>
            <person name="Winkler M.E."/>
        </authorList>
    </citation>
    <scope>NUCLEOTIDE SEQUENCE [LARGE SCALE GENOMIC DNA]</scope>
    <source>
        <strain>D39 / NCTC 7466</strain>
    </source>
</reference>
<sequence length="322" mass="35329">MSQLYDITIVGGGPVGLFAAFYAHLRQAKVQIIDSLPQLGGQPAILYPEKEILDVPGFPNLTGEELTNRLIEQLNGFDTPIHLNETVLEIDKQEEEFAITTSKGSHLTKTVIIAMGGGAFKPRPLELEGVEDYENIHYHVSNIQQYAGKKVTILGGGDSAVDWALAFEKIAPTTLVHRRDNFRALEHSVQALQESSVTIKTPFAPSQLLGDGKTLDKLEITKVKSDETETIDLDHLFVNYGFKSSVGNLKNWGLDLNRHKIIVNSKQESSQAGIYAIGDCCYYDGKIDLIATGLGEAPTAVNNAINYIDPEQKVQPKHSTSL</sequence>